<sequence>MVVVRLARGGAKKRPFYNMVVADSRRHRDGKFIERVGFYNPRATGGEESLRIQMDRLNHWQSQGAQLSSTVSRLVKQFGRQQKPA</sequence>
<dbReference type="EMBL" id="CP000450">
    <property type="protein sequence ID" value="ABI58722.1"/>
    <property type="molecule type" value="Genomic_DNA"/>
</dbReference>
<dbReference type="RefSeq" id="WP_011633564.1">
    <property type="nucleotide sequence ID" value="NC_008344.1"/>
</dbReference>
<dbReference type="SMR" id="Q0AIU9"/>
<dbReference type="STRING" id="335283.Neut_0445"/>
<dbReference type="KEGG" id="net:Neut_0445"/>
<dbReference type="eggNOG" id="COG0228">
    <property type="taxonomic scope" value="Bacteria"/>
</dbReference>
<dbReference type="HOGENOM" id="CLU_100590_5_1_4"/>
<dbReference type="OrthoDB" id="9807878at2"/>
<dbReference type="Proteomes" id="UP000001966">
    <property type="component" value="Chromosome"/>
</dbReference>
<dbReference type="GO" id="GO:0005737">
    <property type="term" value="C:cytoplasm"/>
    <property type="evidence" value="ECO:0007669"/>
    <property type="project" value="UniProtKB-ARBA"/>
</dbReference>
<dbReference type="GO" id="GO:0015935">
    <property type="term" value="C:small ribosomal subunit"/>
    <property type="evidence" value="ECO:0007669"/>
    <property type="project" value="TreeGrafter"/>
</dbReference>
<dbReference type="GO" id="GO:0003735">
    <property type="term" value="F:structural constituent of ribosome"/>
    <property type="evidence" value="ECO:0007669"/>
    <property type="project" value="InterPro"/>
</dbReference>
<dbReference type="GO" id="GO:0006412">
    <property type="term" value="P:translation"/>
    <property type="evidence" value="ECO:0007669"/>
    <property type="project" value="UniProtKB-UniRule"/>
</dbReference>
<dbReference type="Gene3D" id="3.30.1320.10">
    <property type="match status" value="1"/>
</dbReference>
<dbReference type="HAMAP" id="MF_00385">
    <property type="entry name" value="Ribosomal_bS16"/>
    <property type="match status" value="1"/>
</dbReference>
<dbReference type="InterPro" id="IPR000307">
    <property type="entry name" value="Ribosomal_bS16"/>
</dbReference>
<dbReference type="InterPro" id="IPR020592">
    <property type="entry name" value="Ribosomal_bS16_CS"/>
</dbReference>
<dbReference type="InterPro" id="IPR023803">
    <property type="entry name" value="Ribosomal_bS16_dom_sf"/>
</dbReference>
<dbReference type="NCBIfam" id="TIGR00002">
    <property type="entry name" value="S16"/>
    <property type="match status" value="1"/>
</dbReference>
<dbReference type="PANTHER" id="PTHR12919">
    <property type="entry name" value="30S RIBOSOMAL PROTEIN S16"/>
    <property type="match status" value="1"/>
</dbReference>
<dbReference type="PANTHER" id="PTHR12919:SF20">
    <property type="entry name" value="SMALL RIBOSOMAL SUBUNIT PROTEIN BS16M"/>
    <property type="match status" value="1"/>
</dbReference>
<dbReference type="Pfam" id="PF00886">
    <property type="entry name" value="Ribosomal_S16"/>
    <property type="match status" value="1"/>
</dbReference>
<dbReference type="SUPFAM" id="SSF54565">
    <property type="entry name" value="Ribosomal protein S16"/>
    <property type="match status" value="1"/>
</dbReference>
<dbReference type="PROSITE" id="PS00732">
    <property type="entry name" value="RIBOSOMAL_S16"/>
    <property type="match status" value="1"/>
</dbReference>
<name>RS16_NITEC</name>
<comment type="similarity">
    <text evidence="1">Belongs to the bacterial ribosomal protein bS16 family.</text>
</comment>
<organism>
    <name type="scientific">Nitrosomonas eutropha (strain DSM 101675 / C91 / Nm57)</name>
    <dbReference type="NCBI Taxonomy" id="335283"/>
    <lineage>
        <taxon>Bacteria</taxon>
        <taxon>Pseudomonadati</taxon>
        <taxon>Pseudomonadota</taxon>
        <taxon>Betaproteobacteria</taxon>
        <taxon>Nitrosomonadales</taxon>
        <taxon>Nitrosomonadaceae</taxon>
        <taxon>Nitrosomonas</taxon>
    </lineage>
</organism>
<evidence type="ECO:0000255" key="1">
    <source>
        <dbReference type="HAMAP-Rule" id="MF_00385"/>
    </source>
</evidence>
<evidence type="ECO:0000305" key="2"/>
<proteinExistence type="inferred from homology"/>
<reference key="1">
    <citation type="journal article" date="2007" name="Environ. Microbiol.">
        <title>Whole-genome analysis of the ammonia-oxidizing bacterium, Nitrosomonas eutropha C91: implications for niche adaptation.</title>
        <authorList>
            <person name="Stein L.Y."/>
            <person name="Arp D.J."/>
            <person name="Berube P.M."/>
            <person name="Chain P.S."/>
            <person name="Hauser L."/>
            <person name="Jetten M.S."/>
            <person name="Klotz M.G."/>
            <person name="Larimer F.W."/>
            <person name="Norton J.M."/>
            <person name="Op den Camp H.J.M."/>
            <person name="Shin M."/>
            <person name="Wei X."/>
        </authorList>
    </citation>
    <scope>NUCLEOTIDE SEQUENCE [LARGE SCALE GENOMIC DNA]</scope>
    <source>
        <strain>DSM 101675 / C91 / Nm57</strain>
    </source>
</reference>
<gene>
    <name evidence="1" type="primary">rpsP</name>
    <name type="ordered locus">Neut_0445</name>
</gene>
<accession>Q0AIU9</accession>
<keyword id="KW-0687">Ribonucleoprotein</keyword>
<keyword id="KW-0689">Ribosomal protein</keyword>
<protein>
    <recommendedName>
        <fullName evidence="1">Small ribosomal subunit protein bS16</fullName>
    </recommendedName>
    <alternativeName>
        <fullName evidence="2">30S ribosomal protein S16</fullName>
    </alternativeName>
</protein>
<feature type="chain" id="PRO_1000049301" description="Small ribosomal subunit protein bS16">
    <location>
        <begin position="1"/>
        <end position="85"/>
    </location>
</feature>